<keyword id="KW-0963">Cytoplasm</keyword>
<keyword id="KW-0255">Endonuclease</keyword>
<keyword id="KW-0378">Hydrolase</keyword>
<keyword id="KW-0460">Magnesium</keyword>
<keyword id="KW-0479">Metal-binding</keyword>
<keyword id="KW-0507">mRNA processing</keyword>
<keyword id="KW-0540">Nuclease</keyword>
<keyword id="KW-0694">RNA-binding</keyword>
<keyword id="KW-0698">rRNA processing</keyword>
<keyword id="KW-0699">rRNA-binding</keyword>
<keyword id="KW-0819">tRNA processing</keyword>
<gene>
    <name evidence="1" type="primary">rnc</name>
    <name type="ordered locus">BARBAKC583_0473</name>
</gene>
<protein>
    <recommendedName>
        <fullName evidence="1">Ribonuclease 3</fullName>
        <ecNumber evidence="1">3.1.26.3</ecNumber>
    </recommendedName>
    <alternativeName>
        <fullName evidence="1">Ribonuclease III</fullName>
        <shortName evidence="1">RNase III</shortName>
    </alternativeName>
</protein>
<dbReference type="EC" id="3.1.26.3" evidence="1"/>
<dbReference type="EMBL" id="CP000524">
    <property type="protein sequence ID" value="ABM45546.1"/>
    <property type="molecule type" value="Genomic_DNA"/>
</dbReference>
<dbReference type="RefSeq" id="WP_005766546.1">
    <property type="nucleotide sequence ID" value="NC_008783.1"/>
</dbReference>
<dbReference type="SMR" id="A1US36"/>
<dbReference type="STRING" id="360095.BARBAKC583_0473"/>
<dbReference type="GeneID" id="4685102"/>
<dbReference type="KEGG" id="bbk:BARBAKC583_0473"/>
<dbReference type="PATRIC" id="fig|360095.6.peg.455"/>
<dbReference type="eggNOG" id="COG0571">
    <property type="taxonomic scope" value="Bacteria"/>
</dbReference>
<dbReference type="HOGENOM" id="CLU_000907_1_1_5"/>
<dbReference type="OrthoDB" id="9805026at2"/>
<dbReference type="Proteomes" id="UP000000643">
    <property type="component" value="Chromosome"/>
</dbReference>
<dbReference type="GO" id="GO:0005737">
    <property type="term" value="C:cytoplasm"/>
    <property type="evidence" value="ECO:0007669"/>
    <property type="project" value="UniProtKB-SubCell"/>
</dbReference>
<dbReference type="GO" id="GO:0003725">
    <property type="term" value="F:double-stranded RNA binding"/>
    <property type="evidence" value="ECO:0007669"/>
    <property type="project" value="TreeGrafter"/>
</dbReference>
<dbReference type="GO" id="GO:0046872">
    <property type="term" value="F:metal ion binding"/>
    <property type="evidence" value="ECO:0007669"/>
    <property type="project" value="UniProtKB-KW"/>
</dbReference>
<dbReference type="GO" id="GO:0004525">
    <property type="term" value="F:ribonuclease III activity"/>
    <property type="evidence" value="ECO:0007669"/>
    <property type="project" value="UniProtKB-UniRule"/>
</dbReference>
<dbReference type="GO" id="GO:0019843">
    <property type="term" value="F:rRNA binding"/>
    <property type="evidence" value="ECO:0007669"/>
    <property type="project" value="UniProtKB-KW"/>
</dbReference>
<dbReference type="GO" id="GO:0006397">
    <property type="term" value="P:mRNA processing"/>
    <property type="evidence" value="ECO:0007669"/>
    <property type="project" value="UniProtKB-UniRule"/>
</dbReference>
<dbReference type="GO" id="GO:0010468">
    <property type="term" value="P:regulation of gene expression"/>
    <property type="evidence" value="ECO:0007669"/>
    <property type="project" value="TreeGrafter"/>
</dbReference>
<dbReference type="GO" id="GO:0006364">
    <property type="term" value="P:rRNA processing"/>
    <property type="evidence" value="ECO:0007669"/>
    <property type="project" value="UniProtKB-UniRule"/>
</dbReference>
<dbReference type="GO" id="GO:0008033">
    <property type="term" value="P:tRNA processing"/>
    <property type="evidence" value="ECO:0007669"/>
    <property type="project" value="UniProtKB-KW"/>
</dbReference>
<dbReference type="CDD" id="cd10845">
    <property type="entry name" value="DSRM_RNAse_III_family"/>
    <property type="match status" value="1"/>
</dbReference>
<dbReference type="CDD" id="cd00593">
    <property type="entry name" value="RIBOc"/>
    <property type="match status" value="1"/>
</dbReference>
<dbReference type="FunFam" id="1.10.1520.10:FF:000001">
    <property type="entry name" value="Ribonuclease 3"/>
    <property type="match status" value="1"/>
</dbReference>
<dbReference type="Gene3D" id="3.30.160.20">
    <property type="match status" value="1"/>
</dbReference>
<dbReference type="Gene3D" id="1.10.1520.10">
    <property type="entry name" value="Ribonuclease III domain"/>
    <property type="match status" value="1"/>
</dbReference>
<dbReference type="HAMAP" id="MF_00104">
    <property type="entry name" value="RNase_III"/>
    <property type="match status" value="1"/>
</dbReference>
<dbReference type="InterPro" id="IPR014720">
    <property type="entry name" value="dsRBD_dom"/>
</dbReference>
<dbReference type="InterPro" id="IPR011907">
    <property type="entry name" value="RNase_III"/>
</dbReference>
<dbReference type="InterPro" id="IPR000999">
    <property type="entry name" value="RNase_III_dom"/>
</dbReference>
<dbReference type="InterPro" id="IPR036389">
    <property type="entry name" value="RNase_III_sf"/>
</dbReference>
<dbReference type="NCBIfam" id="TIGR02191">
    <property type="entry name" value="RNaseIII"/>
    <property type="match status" value="1"/>
</dbReference>
<dbReference type="PANTHER" id="PTHR11207:SF0">
    <property type="entry name" value="RIBONUCLEASE 3"/>
    <property type="match status" value="1"/>
</dbReference>
<dbReference type="PANTHER" id="PTHR11207">
    <property type="entry name" value="RIBONUCLEASE III"/>
    <property type="match status" value="1"/>
</dbReference>
<dbReference type="Pfam" id="PF00035">
    <property type="entry name" value="dsrm"/>
    <property type="match status" value="1"/>
</dbReference>
<dbReference type="Pfam" id="PF14622">
    <property type="entry name" value="Ribonucleas_3_3"/>
    <property type="match status" value="1"/>
</dbReference>
<dbReference type="SMART" id="SM00358">
    <property type="entry name" value="DSRM"/>
    <property type="match status" value="1"/>
</dbReference>
<dbReference type="SMART" id="SM00535">
    <property type="entry name" value="RIBOc"/>
    <property type="match status" value="1"/>
</dbReference>
<dbReference type="SUPFAM" id="SSF54768">
    <property type="entry name" value="dsRNA-binding domain-like"/>
    <property type="match status" value="1"/>
</dbReference>
<dbReference type="SUPFAM" id="SSF69065">
    <property type="entry name" value="RNase III domain-like"/>
    <property type="match status" value="1"/>
</dbReference>
<dbReference type="PROSITE" id="PS50137">
    <property type="entry name" value="DS_RBD"/>
    <property type="match status" value="1"/>
</dbReference>
<dbReference type="PROSITE" id="PS00517">
    <property type="entry name" value="RNASE_3_1"/>
    <property type="match status" value="1"/>
</dbReference>
<dbReference type="PROSITE" id="PS50142">
    <property type="entry name" value="RNASE_3_2"/>
    <property type="match status" value="1"/>
</dbReference>
<sequence length="235" mass="26517">MKHQTIDQLKKLTGHSFKNEDLLKKALTHSSVQRSEQGNYERLEFLGDRVLGLLVAEMLYQFFPQASEGELSVRLNGLVNAQTCADIAREIGLPDMVHVGCEMKNLEGRRLANMHADVVEALIAVIYLDGGLKSVRPFIQRYWQDRAKKIDASRRDAKTELQEWAHTQNGVQPQYRVIKRCGLDHDPVFVVEVSVPGFVSEVGEGGSKRHAERAAAEKILRREGMWGSIEKDDHG</sequence>
<reference key="1">
    <citation type="submission" date="2006-12" db="EMBL/GenBank/DDBJ databases">
        <authorList>
            <person name="Hendrix L."/>
            <person name="Mohamoud Y."/>
            <person name="Radune D."/>
            <person name="Shvartsbeyn A."/>
            <person name="Daugherty S."/>
            <person name="Dodson R."/>
            <person name="Durkin A.S."/>
            <person name="Harkins D."/>
            <person name="Huot H."/>
            <person name="Kothari S.P."/>
            <person name="Madupu R."/>
            <person name="Li J."/>
            <person name="Nelson W.C."/>
            <person name="Shrivastava S."/>
            <person name="Giglio M.G."/>
            <person name="Haft D."/>
            <person name="Selengut J."/>
            <person name="Fraser-Ligget C."/>
            <person name="Seshadri R."/>
        </authorList>
    </citation>
    <scope>NUCLEOTIDE SEQUENCE [LARGE SCALE GENOMIC DNA]</scope>
    <source>
        <strain>ATCC 35685 / KC583 / Herrer 020/F12,63</strain>
    </source>
</reference>
<feature type="chain" id="PRO_1000075725" description="Ribonuclease 3">
    <location>
        <begin position="1"/>
        <end position="235"/>
    </location>
</feature>
<feature type="domain" description="RNase III" evidence="1">
    <location>
        <begin position="6"/>
        <end position="131"/>
    </location>
</feature>
<feature type="domain" description="DRBM" evidence="1">
    <location>
        <begin position="156"/>
        <end position="225"/>
    </location>
</feature>
<feature type="active site" evidence="1">
    <location>
        <position position="48"/>
    </location>
</feature>
<feature type="active site" evidence="1">
    <location>
        <position position="120"/>
    </location>
</feature>
<feature type="binding site" evidence="1">
    <location>
        <position position="44"/>
    </location>
    <ligand>
        <name>Mg(2+)</name>
        <dbReference type="ChEBI" id="CHEBI:18420"/>
    </ligand>
</feature>
<feature type="binding site" evidence="1">
    <location>
        <position position="117"/>
    </location>
    <ligand>
        <name>Mg(2+)</name>
        <dbReference type="ChEBI" id="CHEBI:18420"/>
    </ligand>
</feature>
<feature type="binding site" evidence="1">
    <location>
        <position position="120"/>
    </location>
    <ligand>
        <name>Mg(2+)</name>
        <dbReference type="ChEBI" id="CHEBI:18420"/>
    </ligand>
</feature>
<proteinExistence type="inferred from homology"/>
<organism>
    <name type="scientific">Bartonella bacilliformis (strain ATCC 35685 / KC583 / Herrer 020/F12,63)</name>
    <dbReference type="NCBI Taxonomy" id="360095"/>
    <lineage>
        <taxon>Bacteria</taxon>
        <taxon>Pseudomonadati</taxon>
        <taxon>Pseudomonadota</taxon>
        <taxon>Alphaproteobacteria</taxon>
        <taxon>Hyphomicrobiales</taxon>
        <taxon>Bartonellaceae</taxon>
        <taxon>Bartonella</taxon>
    </lineage>
</organism>
<name>RNC_BARBK</name>
<evidence type="ECO:0000255" key="1">
    <source>
        <dbReference type="HAMAP-Rule" id="MF_00104"/>
    </source>
</evidence>
<accession>A1US36</accession>
<comment type="function">
    <text evidence="1">Digests double-stranded RNA. Involved in the processing of primary rRNA transcript to yield the immediate precursors to the large and small rRNAs (23S and 16S). Processes some mRNAs, and tRNAs when they are encoded in the rRNA operon. Processes pre-crRNA and tracrRNA of type II CRISPR loci if present in the organism.</text>
</comment>
<comment type="catalytic activity">
    <reaction evidence="1">
        <text>Endonucleolytic cleavage to 5'-phosphomonoester.</text>
        <dbReference type="EC" id="3.1.26.3"/>
    </reaction>
</comment>
<comment type="cofactor">
    <cofactor evidence="1">
        <name>Mg(2+)</name>
        <dbReference type="ChEBI" id="CHEBI:18420"/>
    </cofactor>
</comment>
<comment type="subunit">
    <text evidence="1">Homodimer.</text>
</comment>
<comment type="subcellular location">
    <subcellularLocation>
        <location evidence="1">Cytoplasm</location>
    </subcellularLocation>
</comment>
<comment type="similarity">
    <text evidence="1">Belongs to the ribonuclease III family.</text>
</comment>